<proteinExistence type="inferred from homology"/>
<dbReference type="EMBL" id="AM933173">
    <property type="protein sequence ID" value="CAR39776.1"/>
    <property type="molecule type" value="Genomic_DNA"/>
</dbReference>
<dbReference type="RefSeq" id="WP_000941208.1">
    <property type="nucleotide sequence ID" value="NC_011274.1"/>
</dbReference>
<dbReference type="SMR" id="B5RH22"/>
<dbReference type="GeneID" id="93035738"/>
<dbReference type="KEGG" id="seg:SG4006"/>
<dbReference type="HOGENOM" id="CLU_078858_2_1_6"/>
<dbReference type="Proteomes" id="UP000008321">
    <property type="component" value="Chromosome"/>
</dbReference>
<dbReference type="GO" id="GO:0022625">
    <property type="term" value="C:cytosolic large ribosomal subunit"/>
    <property type="evidence" value="ECO:0007669"/>
    <property type="project" value="TreeGrafter"/>
</dbReference>
<dbReference type="GO" id="GO:0019843">
    <property type="term" value="F:rRNA binding"/>
    <property type="evidence" value="ECO:0007669"/>
    <property type="project" value="UniProtKB-UniRule"/>
</dbReference>
<dbReference type="GO" id="GO:0003735">
    <property type="term" value="F:structural constituent of ribosome"/>
    <property type="evidence" value="ECO:0007669"/>
    <property type="project" value="InterPro"/>
</dbReference>
<dbReference type="GO" id="GO:0000049">
    <property type="term" value="F:tRNA binding"/>
    <property type="evidence" value="ECO:0007669"/>
    <property type="project" value="UniProtKB-KW"/>
</dbReference>
<dbReference type="GO" id="GO:0006412">
    <property type="term" value="P:translation"/>
    <property type="evidence" value="ECO:0007669"/>
    <property type="project" value="UniProtKB-UniRule"/>
</dbReference>
<dbReference type="CDD" id="cd01433">
    <property type="entry name" value="Ribosomal_L16_L10e"/>
    <property type="match status" value="1"/>
</dbReference>
<dbReference type="FunFam" id="3.90.1170.10:FF:000001">
    <property type="entry name" value="50S ribosomal protein L16"/>
    <property type="match status" value="1"/>
</dbReference>
<dbReference type="Gene3D" id="3.90.1170.10">
    <property type="entry name" value="Ribosomal protein L10e/L16"/>
    <property type="match status" value="1"/>
</dbReference>
<dbReference type="HAMAP" id="MF_01342">
    <property type="entry name" value="Ribosomal_uL16"/>
    <property type="match status" value="1"/>
</dbReference>
<dbReference type="InterPro" id="IPR047873">
    <property type="entry name" value="Ribosomal_uL16"/>
</dbReference>
<dbReference type="InterPro" id="IPR000114">
    <property type="entry name" value="Ribosomal_uL16_bact-type"/>
</dbReference>
<dbReference type="InterPro" id="IPR020798">
    <property type="entry name" value="Ribosomal_uL16_CS"/>
</dbReference>
<dbReference type="InterPro" id="IPR016180">
    <property type="entry name" value="Ribosomal_uL16_dom"/>
</dbReference>
<dbReference type="InterPro" id="IPR036920">
    <property type="entry name" value="Ribosomal_uL16_sf"/>
</dbReference>
<dbReference type="NCBIfam" id="TIGR01164">
    <property type="entry name" value="rplP_bact"/>
    <property type="match status" value="1"/>
</dbReference>
<dbReference type="PANTHER" id="PTHR12220">
    <property type="entry name" value="50S/60S RIBOSOMAL PROTEIN L16"/>
    <property type="match status" value="1"/>
</dbReference>
<dbReference type="PANTHER" id="PTHR12220:SF13">
    <property type="entry name" value="LARGE RIBOSOMAL SUBUNIT PROTEIN UL16M"/>
    <property type="match status" value="1"/>
</dbReference>
<dbReference type="Pfam" id="PF00252">
    <property type="entry name" value="Ribosomal_L16"/>
    <property type="match status" value="1"/>
</dbReference>
<dbReference type="PRINTS" id="PR00060">
    <property type="entry name" value="RIBOSOMALL16"/>
</dbReference>
<dbReference type="SUPFAM" id="SSF54686">
    <property type="entry name" value="Ribosomal protein L16p/L10e"/>
    <property type="match status" value="1"/>
</dbReference>
<dbReference type="PROSITE" id="PS00586">
    <property type="entry name" value="RIBOSOMAL_L16_1"/>
    <property type="match status" value="1"/>
</dbReference>
<dbReference type="PROSITE" id="PS00701">
    <property type="entry name" value="RIBOSOMAL_L16_2"/>
    <property type="match status" value="1"/>
</dbReference>
<organism>
    <name type="scientific">Salmonella gallinarum (strain 287/91 / NCTC 13346)</name>
    <dbReference type="NCBI Taxonomy" id="550538"/>
    <lineage>
        <taxon>Bacteria</taxon>
        <taxon>Pseudomonadati</taxon>
        <taxon>Pseudomonadota</taxon>
        <taxon>Gammaproteobacteria</taxon>
        <taxon>Enterobacterales</taxon>
        <taxon>Enterobacteriaceae</taxon>
        <taxon>Salmonella</taxon>
    </lineage>
</organism>
<name>RL16_SALG2</name>
<evidence type="ECO:0000255" key="1">
    <source>
        <dbReference type="HAMAP-Rule" id="MF_01342"/>
    </source>
</evidence>
<evidence type="ECO:0000305" key="2"/>
<sequence>MLQPKRTKFRKMHKGRNRGLAAGADVSFGSFGLKAVGRGRLTARQIEAARRAMTRAVKRQGKIWIRVFPDKPITEKPLAVRMGKGKGNVEYWVALIQPGKVLYEMDGVPEELAREAFKLAAAKLPIKTTFVTKTVM</sequence>
<accession>B5RH22</accession>
<reference key="1">
    <citation type="journal article" date="2008" name="Genome Res.">
        <title>Comparative genome analysis of Salmonella enteritidis PT4 and Salmonella gallinarum 287/91 provides insights into evolutionary and host adaptation pathways.</title>
        <authorList>
            <person name="Thomson N.R."/>
            <person name="Clayton D.J."/>
            <person name="Windhorst D."/>
            <person name="Vernikos G."/>
            <person name="Davidson S."/>
            <person name="Churcher C."/>
            <person name="Quail M.A."/>
            <person name="Stevens M."/>
            <person name="Jones M.A."/>
            <person name="Watson M."/>
            <person name="Barron A."/>
            <person name="Layton A."/>
            <person name="Pickard D."/>
            <person name="Kingsley R.A."/>
            <person name="Bignell A."/>
            <person name="Clark L."/>
            <person name="Harris B."/>
            <person name="Ormond D."/>
            <person name="Abdellah Z."/>
            <person name="Brooks K."/>
            <person name="Cherevach I."/>
            <person name="Chillingworth T."/>
            <person name="Woodward J."/>
            <person name="Norberczak H."/>
            <person name="Lord A."/>
            <person name="Arrowsmith C."/>
            <person name="Jagels K."/>
            <person name="Moule S."/>
            <person name="Mungall K."/>
            <person name="Saunders M."/>
            <person name="Whitehead S."/>
            <person name="Chabalgoity J.A."/>
            <person name="Maskell D."/>
            <person name="Humphreys T."/>
            <person name="Roberts M."/>
            <person name="Barrow P.A."/>
            <person name="Dougan G."/>
            <person name="Parkhill J."/>
        </authorList>
    </citation>
    <scope>NUCLEOTIDE SEQUENCE [LARGE SCALE GENOMIC DNA]</scope>
    <source>
        <strain>287/91 / NCTC 13346</strain>
    </source>
</reference>
<protein>
    <recommendedName>
        <fullName evidence="1">Large ribosomal subunit protein uL16</fullName>
    </recommendedName>
    <alternativeName>
        <fullName evidence="2">50S ribosomal protein L16</fullName>
    </alternativeName>
</protein>
<gene>
    <name evidence="1" type="primary">rplP</name>
    <name type="ordered locus">SG4006</name>
</gene>
<keyword id="KW-0687">Ribonucleoprotein</keyword>
<keyword id="KW-0689">Ribosomal protein</keyword>
<keyword id="KW-0694">RNA-binding</keyword>
<keyword id="KW-0699">rRNA-binding</keyword>
<keyword id="KW-0820">tRNA-binding</keyword>
<comment type="function">
    <text evidence="1">Binds 23S rRNA and is also seen to make contacts with the A and possibly P site tRNAs.</text>
</comment>
<comment type="subunit">
    <text evidence="1">Part of the 50S ribosomal subunit.</text>
</comment>
<comment type="similarity">
    <text evidence="1">Belongs to the universal ribosomal protein uL16 family.</text>
</comment>
<feature type="chain" id="PRO_1000143023" description="Large ribosomal subunit protein uL16">
    <location>
        <begin position="1"/>
        <end position="136"/>
    </location>
</feature>